<reference key="1">
    <citation type="journal article" date="2000" name="Nature">
        <title>The genome sequence of the plant pathogen Xylella fastidiosa.</title>
        <authorList>
            <person name="Simpson A.J.G."/>
            <person name="Reinach F.C."/>
            <person name="Arruda P."/>
            <person name="Abreu F.A."/>
            <person name="Acencio M."/>
            <person name="Alvarenga R."/>
            <person name="Alves L.M.C."/>
            <person name="Araya J.E."/>
            <person name="Baia G.S."/>
            <person name="Baptista C.S."/>
            <person name="Barros M.H."/>
            <person name="Bonaccorsi E.D."/>
            <person name="Bordin S."/>
            <person name="Bove J.M."/>
            <person name="Briones M.R.S."/>
            <person name="Bueno M.R.P."/>
            <person name="Camargo A.A."/>
            <person name="Camargo L.E.A."/>
            <person name="Carraro D.M."/>
            <person name="Carrer H."/>
            <person name="Colauto N.B."/>
            <person name="Colombo C."/>
            <person name="Costa F.F."/>
            <person name="Costa M.C.R."/>
            <person name="Costa-Neto C.M."/>
            <person name="Coutinho L.L."/>
            <person name="Cristofani M."/>
            <person name="Dias-Neto E."/>
            <person name="Docena C."/>
            <person name="El-Dorry H."/>
            <person name="Facincani A.P."/>
            <person name="Ferreira A.J.S."/>
            <person name="Ferreira V.C.A."/>
            <person name="Ferro J.A."/>
            <person name="Fraga J.S."/>
            <person name="Franca S.C."/>
            <person name="Franco M.C."/>
            <person name="Frohme M."/>
            <person name="Furlan L.R."/>
            <person name="Garnier M."/>
            <person name="Goldman G.H."/>
            <person name="Goldman M.H.S."/>
            <person name="Gomes S.L."/>
            <person name="Gruber A."/>
            <person name="Ho P.L."/>
            <person name="Hoheisel J.D."/>
            <person name="Junqueira M.L."/>
            <person name="Kemper E.L."/>
            <person name="Kitajima J.P."/>
            <person name="Krieger J.E."/>
            <person name="Kuramae E.E."/>
            <person name="Laigret F."/>
            <person name="Lambais M.R."/>
            <person name="Leite L.C.C."/>
            <person name="Lemos E.G.M."/>
            <person name="Lemos M.V.F."/>
            <person name="Lopes S.A."/>
            <person name="Lopes C.R."/>
            <person name="Machado J.A."/>
            <person name="Machado M.A."/>
            <person name="Madeira A.M.B.N."/>
            <person name="Madeira H.M.F."/>
            <person name="Marino C.L."/>
            <person name="Marques M.V."/>
            <person name="Martins E.A.L."/>
            <person name="Martins E.M.F."/>
            <person name="Matsukuma A.Y."/>
            <person name="Menck C.F.M."/>
            <person name="Miracca E.C."/>
            <person name="Miyaki C.Y."/>
            <person name="Monteiro-Vitorello C.B."/>
            <person name="Moon D.H."/>
            <person name="Nagai M.A."/>
            <person name="Nascimento A.L.T.O."/>
            <person name="Netto L.E.S."/>
            <person name="Nhani A. Jr."/>
            <person name="Nobrega F.G."/>
            <person name="Nunes L.R."/>
            <person name="Oliveira M.A."/>
            <person name="de Oliveira M.C."/>
            <person name="de Oliveira R.C."/>
            <person name="Palmieri D.A."/>
            <person name="Paris A."/>
            <person name="Peixoto B.R."/>
            <person name="Pereira G.A.G."/>
            <person name="Pereira H.A. Jr."/>
            <person name="Pesquero J.B."/>
            <person name="Quaggio R.B."/>
            <person name="Roberto P.G."/>
            <person name="Rodrigues V."/>
            <person name="de Rosa A.J.M."/>
            <person name="de Rosa V.E. Jr."/>
            <person name="de Sa R.G."/>
            <person name="Santelli R.V."/>
            <person name="Sawasaki H.E."/>
            <person name="da Silva A.C.R."/>
            <person name="da Silva A.M."/>
            <person name="da Silva F.R."/>
            <person name="Silva W.A. Jr."/>
            <person name="da Silveira J.F."/>
            <person name="Silvestri M.L.Z."/>
            <person name="Siqueira W.J."/>
            <person name="de Souza A.A."/>
            <person name="de Souza A.P."/>
            <person name="Terenzi M.F."/>
            <person name="Truffi D."/>
            <person name="Tsai S.M."/>
            <person name="Tsuhako M.H."/>
            <person name="Vallada H."/>
            <person name="Van Sluys M.A."/>
            <person name="Verjovski-Almeida S."/>
            <person name="Vettore A.L."/>
            <person name="Zago M.A."/>
            <person name="Zatz M."/>
            <person name="Meidanis J."/>
            <person name="Setubal J.C."/>
        </authorList>
    </citation>
    <scope>NUCLEOTIDE SEQUENCE [LARGE SCALE GENOMIC DNA]</scope>
    <source>
        <strain>9a5c</strain>
    </source>
</reference>
<geneLocation type="plasmid">
    <name>pXF51</name>
</geneLocation>
<gene>
    <name type="ordered locus">XF_a0059</name>
</gene>
<dbReference type="EMBL" id="AE003851">
    <property type="protein sequence ID" value="AAF85627.1"/>
    <property type="molecule type" value="Genomic_DNA"/>
</dbReference>
<dbReference type="PIR" id="B82868">
    <property type="entry name" value="B82868"/>
</dbReference>
<dbReference type="RefSeq" id="WP_010895251.1">
    <property type="nucleotide sequence ID" value="NC_002490.1"/>
</dbReference>
<dbReference type="SMR" id="Q9PHE9"/>
<dbReference type="KEGG" id="xfa:XF_a0059"/>
<dbReference type="eggNOG" id="COG1475">
    <property type="taxonomic scope" value="Bacteria"/>
</dbReference>
<dbReference type="HOGENOM" id="CLU_686865_0_0_6"/>
<dbReference type="Proteomes" id="UP000000812">
    <property type="component" value="Plasmid pXF51"/>
</dbReference>
<dbReference type="GO" id="GO:0005694">
    <property type="term" value="C:chromosome"/>
    <property type="evidence" value="ECO:0007669"/>
    <property type="project" value="TreeGrafter"/>
</dbReference>
<dbReference type="GO" id="GO:0003677">
    <property type="term" value="F:DNA binding"/>
    <property type="evidence" value="ECO:0007669"/>
    <property type="project" value="UniProtKB-KW"/>
</dbReference>
<dbReference type="GO" id="GO:0007059">
    <property type="term" value="P:chromosome segregation"/>
    <property type="evidence" value="ECO:0007669"/>
    <property type="project" value="UniProtKB-KW"/>
</dbReference>
<dbReference type="CDD" id="cd16393">
    <property type="entry name" value="SPO0J_N"/>
    <property type="match status" value="1"/>
</dbReference>
<dbReference type="FunFam" id="3.90.1530.30:FF:000001">
    <property type="entry name" value="Chromosome partitioning protein ParB"/>
    <property type="match status" value="1"/>
</dbReference>
<dbReference type="Gene3D" id="1.10.10.2830">
    <property type="match status" value="1"/>
</dbReference>
<dbReference type="Gene3D" id="3.90.1530.30">
    <property type="match status" value="1"/>
</dbReference>
<dbReference type="InterPro" id="IPR050336">
    <property type="entry name" value="Chromosome_partition/occlusion"/>
</dbReference>
<dbReference type="InterPro" id="IPR004437">
    <property type="entry name" value="ParB/RepB/Spo0J"/>
</dbReference>
<dbReference type="InterPro" id="IPR003115">
    <property type="entry name" value="ParB/Sulfiredoxin_dom"/>
</dbReference>
<dbReference type="InterPro" id="IPR036086">
    <property type="entry name" value="ParB/Sulfiredoxin_sf"/>
</dbReference>
<dbReference type="NCBIfam" id="TIGR00180">
    <property type="entry name" value="parB_part"/>
    <property type="match status" value="1"/>
</dbReference>
<dbReference type="PANTHER" id="PTHR33375">
    <property type="entry name" value="CHROMOSOME-PARTITIONING PROTEIN PARB-RELATED"/>
    <property type="match status" value="1"/>
</dbReference>
<dbReference type="PANTHER" id="PTHR33375:SF1">
    <property type="entry name" value="CHROMOSOME-PARTITIONING PROTEIN PARB-RELATED"/>
    <property type="match status" value="1"/>
</dbReference>
<dbReference type="Pfam" id="PF02195">
    <property type="entry name" value="ParBc"/>
    <property type="match status" value="1"/>
</dbReference>
<dbReference type="SMART" id="SM00470">
    <property type="entry name" value="ParB"/>
    <property type="match status" value="1"/>
</dbReference>
<dbReference type="SUPFAM" id="SSF109709">
    <property type="entry name" value="KorB DNA-binding domain-like"/>
    <property type="match status" value="1"/>
</dbReference>
<dbReference type="SUPFAM" id="SSF110849">
    <property type="entry name" value="ParB/Sulfiredoxin"/>
    <property type="match status" value="1"/>
</dbReference>
<evidence type="ECO:0000256" key="1">
    <source>
        <dbReference type="SAM" id="MobiDB-lite"/>
    </source>
</evidence>
<evidence type="ECO:0000305" key="2"/>
<sequence>MNAKIALTETTNIKEPEPVTTATATKENAFAGASDALGAGIDALFADQGAQYSLIPLDMIQVKTQIRESFEDEENTLEDLAASIKVRGVLQPILLRSNSEGYELIAGERRYRASKLAGLEQIPAYIREMSDEEAEDAQMAENIHRKNLTQIEEAKKIQRDLDKLGSVDAVLEKHQKSRPWLSKMLALLNLPEQAKRLVIENVSADVEVINTVKMVEKINPVKAKELVDDLKKTRGKENARDKAAAVKEEVKPSKKPKADNGEKTPKGRSHEELGQLDVFAGAKFDPFSDAHNGSESPRPLILSPVDVLNRAYTNIFEHGNSPKTILETMPKDEKDRVEGWLHSFYDAGKSVNQDVGRSVIQGFRNGTFSSDGDGAFALVAFLHGVESAEFHLLNVFGSVRK</sequence>
<protein>
    <recommendedName>
        <fullName>Probable plasmid-partitioning protein ParB</fullName>
    </recommendedName>
</protein>
<proteinExistence type="inferred from homology"/>
<feature type="chain" id="PRO_0000178697" description="Probable plasmid-partitioning protein ParB">
    <location>
        <begin position="1"/>
        <end position="401"/>
    </location>
</feature>
<feature type="region of interest" description="Disordered" evidence="1">
    <location>
        <begin position="232"/>
        <end position="272"/>
    </location>
</feature>
<comment type="similarity">
    <text evidence="2">Belongs to the ParB family.</text>
</comment>
<name>PARB2_XYLFA</name>
<accession>Q9PHE9</accession>
<keyword id="KW-0159">Chromosome partition</keyword>
<keyword id="KW-0238">DNA-binding</keyword>
<keyword id="KW-0614">Plasmid</keyword>
<organism>
    <name type="scientific">Xylella fastidiosa (strain 9a5c)</name>
    <dbReference type="NCBI Taxonomy" id="160492"/>
    <lineage>
        <taxon>Bacteria</taxon>
        <taxon>Pseudomonadati</taxon>
        <taxon>Pseudomonadota</taxon>
        <taxon>Gammaproteobacteria</taxon>
        <taxon>Lysobacterales</taxon>
        <taxon>Lysobacteraceae</taxon>
        <taxon>Xylella</taxon>
    </lineage>
</organism>